<name>MAF1_YEAST</name>
<comment type="function">
    <text evidence="2">Mediator of diverse signals that repress RNA polymerase III transcription. Inhibits the de novo assembly of TFIIIB onto DNA.</text>
</comment>
<comment type="interaction">
    <interactant intactId="EBI-10375">
        <id>P41910</id>
    </interactant>
    <interactant intactId="EBI-15835">
        <id>P32910</id>
        <label>RPC34</label>
    </interactant>
    <organismsDiffer>false</organismsDiffer>
    <experiments>4</experiments>
</comment>
<comment type="interaction">
    <interactant intactId="EBI-10375">
        <id>P41910</id>
    </interactant>
    <interactant intactId="EBI-15810">
        <id>P04051</id>
        <label>RPO31</label>
    </interactant>
    <organismsDiffer>false</organismsDiffer>
    <experiments>5</experiments>
</comment>
<comment type="subcellular location">
    <subcellularLocation>
        <location>Cytoplasm</location>
    </subcellularLocation>
    <subcellularLocation>
        <location>Nucleus</location>
    </subcellularLocation>
</comment>
<comment type="PTM">
    <text evidence="4">Phosphorylated by PKA in a TORC1-dependent manner. Phosphorylation at PKA consensus sites RRxS/T decreases upon rapamycin treatment.</text>
</comment>
<comment type="miscellaneous">
    <text evidence="3">Present with 1720 molecules/cell in log phase SD medium.</text>
</comment>
<comment type="similarity">
    <text evidence="5">Belongs to the MAF1 family.</text>
</comment>
<dbReference type="EMBL" id="U19492">
    <property type="protein sequence ID" value="AAB51655.1"/>
    <property type="molecule type" value="Genomic_DNA"/>
</dbReference>
<dbReference type="EMBL" id="Z48008">
    <property type="protein sequence ID" value="CAA88065.1"/>
    <property type="molecule type" value="Genomic_DNA"/>
</dbReference>
<dbReference type="EMBL" id="BK006938">
    <property type="protein sequence ID" value="DAA11853.1"/>
    <property type="molecule type" value="Genomic_DNA"/>
</dbReference>
<dbReference type="PIR" id="S50986">
    <property type="entry name" value="S50986"/>
</dbReference>
<dbReference type="RefSeq" id="NP_010288.1">
    <property type="nucleotide sequence ID" value="NM_001180313.1"/>
</dbReference>
<dbReference type="PDB" id="6TUT">
    <property type="method" value="EM"/>
    <property type="resolution" value="3.25 A"/>
    <property type="chains" value="R=2-395"/>
</dbReference>
<dbReference type="PDBsum" id="6TUT"/>
<dbReference type="EMDB" id="EMD-10595"/>
<dbReference type="SMR" id="P41910"/>
<dbReference type="BioGRID" id="32058">
    <property type="interactions" value="289"/>
</dbReference>
<dbReference type="DIP" id="DIP-5133N"/>
<dbReference type="FunCoup" id="P41910">
    <property type="interactions" value="142"/>
</dbReference>
<dbReference type="IntAct" id="P41910">
    <property type="interactions" value="29"/>
</dbReference>
<dbReference type="MINT" id="P41910"/>
<dbReference type="STRING" id="4932.YDR005C"/>
<dbReference type="iPTMnet" id="P41910"/>
<dbReference type="PaxDb" id="4932-YDR005C"/>
<dbReference type="PeptideAtlas" id="P41910"/>
<dbReference type="EnsemblFungi" id="YDR005C_mRNA">
    <property type="protein sequence ID" value="YDR005C"/>
    <property type="gene ID" value="YDR005C"/>
</dbReference>
<dbReference type="GeneID" id="851568"/>
<dbReference type="KEGG" id="sce:YDR005C"/>
<dbReference type="AGR" id="SGD:S000002412"/>
<dbReference type="SGD" id="S000002412">
    <property type="gene designation" value="MAF1"/>
</dbReference>
<dbReference type="VEuPathDB" id="FungiDB:YDR005C"/>
<dbReference type="eggNOG" id="KOG3104">
    <property type="taxonomic scope" value="Eukaryota"/>
</dbReference>
<dbReference type="GeneTree" id="ENSGT00940000171523"/>
<dbReference type="HOGENOM" id="CLU_037043_2_1_1"/>
<dbReference type="InParanoid" id="P41910"/>
<dbReference type="OMA" id="INIGPFG"/>
<dbReference type="OrthoDB" id="277029at2759"/>
<dbReference type="BioCyc" id="YEAST:G3O-29627-MONOMER"/>
<dbReference type="Reactome" id="R-SCE-8943724">
    <property type="pathway name" value="Regulation of PTEN gene transcription"/>
</dbReference>
<dbReference type="BioGRID-ORCS" id="851568">
    <property type="hits" value="0 hits in 10 CRISPR screens"/>
</dbReference>
<dbReference type="PRO" id="PR:P41910"/>
<dbReference type="Proteomes" id="UP000002311">
    <property type="component" value="Chromosome IV"/>
</dbReference>
<dbReference type="RNAct" id="P41910">
    <property type="molecule type" value="protein"/>
</dbReference>
<dbReference type="GO" id="GO:0005737">
    <property type="term" value="C:cytoplasm"/>
    <property type="evidence" value="ECO:0000314"/>
    <property type="project" value="SGD"/>
</dbReference>
<dbReference type="GO" id="GO:0005730">
    <property type="term" value="C:nucleolus"/>
    <property type="evidence" value="ECO:0000314"/>
    <property type="project" value="SGD"/>
</dbReference>
<dbReference type="GO" id="GO:0005634">
    <property type="term" value="C:nucleus"/>
    <property type="evidence" value="ECO:0000314"/>
    <property type="project" value="SGD"/>
</dbReference>
<dbReference type="GO" id="GO:0000994">
    <property type="term" value="F:RNA polymerase III core binding"/>
    <property type="evidence" value="ECO:0000314"/>
    <property type="project" value="SGD"/>
</dbReference>
<dbReference type="GO" id="GO:0016480">
    <property type="term" value="P:negative regulation of transcription by RNA polymerase III"/>
    <property type="evidence" value="ECO:0000314"/>
    <property type="project" value="SGD"/>
</dbReference>
<dbReference type="FunFam" id="3.40.1000.50:FF:000006">
    <property type="entry name" value="Repressor of RNA polymerase III transcription MAF1"/>
    <property type="match status" value="1"/>
</dbReference>
<dbReference type="Gene3D" id="3.40.1000.50">
    <property type="entry name" value="Repressor of RNA polymerase III transcription Maf1"/>
    <property type="match status" value="1"/>
</dbReference>
<dbReference type="InterPro" id="IPR015257">
    <property type="entry name" value="Maf1"/>
</dbReference>
<dbReference type="InterPro" id="IPR038564">
    <property type="entry name" value="Maf1_sf"/>
</dbReference>
<dbReference type="PANTHER" id="PTHR22504">
    <property type="entry name" value="REPRESSOR OF RNA POLYMERASE III TRANSCRIPTION MAF1"/>
    <property type="match status" value="1"/>
</dbReference>
<dbReference type="PANTHER" id="PTHR22504:SF0">
    <property type="entry name" value="REPRESSOR OF RNA POLYMERASE III TRANSCRIPTION MAF1 HOMOLOG"/>
    <property type="match status" value="1"/>
</dbReference>
<dbReference type="Pfam" id="PF09174">
    <property type="entry name" value="Maf1"/>
    <property type="match status" value="1"/>
</dbReference>
<keyword id="KW-0002">3D-structure</keyword>
<keyword id="KW-0963">Cytoplasm</keyword>
<keyword id="KW-0539">Nucleus</keyword>
<keyword id="KW-0597">Phosphoprotein</keyword>
<keyword id="KW-1185">Reference proteome</keyword>
<keyword id="KW-0678">Repressor</keyword>
<keyword id="KW-0804">Transcription</keyword>
<keyword id="KW-0805">Transcription regulation</keyword>
<reference key="1">
    <citation type="journal article" date="1997" name="Gene">
        <title>Mutation in a new gene MAF1 affects tRNA suppressor efficiency in Saccharomyces cerevisiae.</title>
        <authorList>
            <person name="Boguta M."/>
            <person name="Czerska K."/>
            <person name="Zoladek T."/>
        </authorList>
    </citation>
    <scope>NUCLEOTIDE SEQUENCE [GENOMIC DNA]</scope>
    <source>
        <strain>T8-1D</strain>
    </source>
</reference>
<reference key="2">
    <citation type="journal article" date="1997" name="Nature">
        <title>The nucleotide sequence of Saccharomyces cerevisiae chromosome IV.</title>
        <authorList>
            <person name="Jacq C."/>
            <person name="Alt-Moerbe J."/>
            <person name="Andre B."/>
            <person name="Arnold W."/>
            <person name="Bahr A."/>
            <person name="Ballesta J.P.G."/>
            <person name="Bargues M."/>
            <person name="Baron L."/>
            <person name="Becker A."/>
            <person name="Biteau N."/>
            <person name="Bloecker H."/>
            <person name="Blugeon C."/>
            <person name="Boskovic J."/>
            <person name="Brandt P."/>
            <person name="Brueckner M."/>
            <person name="Buitrago M.J."/>
            <person name="Coster F."/>
            <person name="Delaveau T."/>
            <person name="del Rey F."/>
            <person name="Dujon B."/>
            <person name="Eide L.G."/>
            <person name="Garcia-Cantalejo J.M."/>
            <person name="Goffeau A."/>
            <person name="Gomez-Peris A."/>
            <person name="Granotier C."/>
            <person name="Hanemann V."/>
            <person name="Hankeln T."/>
            <person name="Hoheisel J.D."/>
            <person name="Jaeger W."/>
            <person name="Jimenez A."/>
            <person name="Jonniaux J.-L."/>
            <person name="Kraemer C."/>
            <person name="Kuester H."/>
            <person name="Laamanen P."/>
            <person name="Legros Y."/>
            <person name="Louis E.J."/>
            <person name="Moeller-Rieker S."/>
            <person name="Monnet A."/>
            <person name="Moro M."/>
            <person name="Mueller-Auer S."/>
            <person name="Nussbaumer B."/>
            <person name="Paricio N."/>
            <person name="Paulin L."/>
            <person name="Perea J."/>
            <person name="Perez-Alonso M."/>
            <person name="Perez-Ortin J.E."/>
            <person name="Pohl T.M."/>
            <person name="Prydz H."/>
            <person name="Purnelle B."/>
            <person name="Rasmussen S.W."/>
            <person name="Remacha M.A."/>
            <person name="Revuelta J.L."/>
            <person name="Rieger M."/>
            <person name="Salom D."/>
            <person name="Saluz H.P."/>
            <person name="Saiz J.E."/>
            <person name="Saren A.-M."/>
            <person name="Schaefer M."/>
            <person name="Scharfe M."/>
            <person name="Schmidt E.R."/>
            <person name="Schneider C."/>
            <person name="Scholler P."/>
            <person name="Schwarz S."/>
            <person name="Soler-Mira A."/>
            <person name="Urrestarazu L.A."/>
            <person name="Verhasselt P."/>
            <person name="Vissers S."/>
            <person name="Voet M."/>
            <person name="Volckaert G."/>
            <person name="Wagner G."/>
            <person name="Wambutt R."/>
            <person name="Wedler E."/>
            <person name="Wedler H."/>
            <person name="Woelfl S."/>
            <person name="Harris D.E."/>
            <person name="Bowman S."/>
            <person name="Brown D."/>
            <person name="Churcher C.M."/>
            <person name="Connor R."/>
            <person name="Dedman K."/>
            <person name="Gentles S."/>
            <person name="Hamlin N."/>
            <person name="Hunt S."/>
            <person name="Jones L."/>
            <person name="McDonald S."/>
            <person name="Murphy L.D."/>
            <person name="Niblett D."/>
            <person name="Odell C."/>
            <person name="Oliver K."/>
            <person name="Rajandream M.A."/>
            <person name="Richards C."/>
            <person name="Shore L."/>
            <person name="Walsh S.V."/>
            <person name="Barrell B.G."/>
            <person name="Dietrich F.S."/>
            <person name="Mulligan J.T."/>
            <person name="Allen E."/>
            <person name="Araujo R."/>
            <person name="Aviles E."/>
            <person name="Berno A."/>
            <person name="Carpenter J."/>
            <person name="Chen E."/>
            <person name="Cherry J.M."/>
            <person name="Chung E."/>
            <person name="Duncan M."/>
            <person name="Hunicke-Smith S."/>
            <person name="Hyman R.W."/>
            <person name="Komp C."/>
            <person name="Lashkari D."/>
            <person name="Lew H."/>
            <person name="Lin D."/>
            <person name="Mosedale D."/>
            <person name="Nakahara K."/>
            <person name="Namath A."/>
            <person name="Oefner P."/>
            <person name="Oh C."/>
            <person name="Petel F.X."/>
            <person name="Roberts D."/>
            <person name="Schramm S."/>
            <person name="Schroeder M."/>
            <person name="Shogren T."/>
            <person name="Shroff N."/>
            <person name="Winant A."/>
            <person name="Yelton M.A."/>
            <person name="Botstein D."/>
            <person name="Davis R.W."/>
            <person name="Johnston M."/>
            <person name="Andrews S."/>
            <person name="Brinkman R."/>
            <person name="Cooper J."/>
            <person name="Ding H."/>
            <person name="Du Z."/>
            <person name="Favello A."/>
            <person name="Fulton L."/>
            <person name="Gattung S."/>
            <person name="Greco T."/>
            <person name="Hallsworth K."/>
            <person name="Hawkins J."/>
            <person name="Hillier L.W."/>
            <person name="Jier M."/>
            <person name="Johnson D."/>
            <person name="Johnston L."/>
            <person name="Kirsten J."/>
            <person name="Kucaba T."/>
            <person name="Langston Y."/>
            <person name="Latreille P."/>
            <person name="Le T."/>
            <person name="Mardis E."/>
            <person name="Menezes S."/>
            <person name="Miller N."/>
            <person name="Nhan M."/>
            <person name="Pauley A."/>
            <person name="Peluso D."/>
            <person name="Rifkin L."/>
            <person name="Riles L."/>
            <person name="Taich A."/>
            <person name="Trevaskis E."/>
            <person name="Vignati D."/>
            <person name="Wilcox L."/>
            <person name="Wohldman P."/>
            <person name="Vaudin M."/>
            <person name="Wilson R."/>
            <person name="Waterston R."/>
            <person name="Albermann K."/>
            <person name="Hani J."/>
            <person name="Heumann K."/>
            <person name="Kleine K."/>
            <person name="Mewes H.-W."/>
            <person name="Zollner A."/>
            <person name="Zaccaria P."/>
        </authorList>
    </citation>
    <scope>NUCLEOTIDE SEQUENCE [LARGE SCALE GENOMIC DNA]</scope>
    <source>
        <strain>ATCC 204508 / S288c</strain>
    </source>
</reference>
<reference key="3">
    <citation type="journal article" date="2014" name="G3 (Bethesda)">
        <title>The reference genome sequence of Saccharomyces cerevisiae: Then and now.</title>
        <authorList>
            <person name="Engel S.R."/>
            <person name="Dietrich F.S."/>
            <person name="Fisk D.G."/>
            <person name="Binkley G."/>
            <person name="Balakrishnan R."/>
            <person name="Costanzo M.C."/>
            <person name="Dwight S.S."/>
            <person name="Hitz B.C."/>
            <person name="Karra K."/>
            <person name="Nash R.S."/>
            <person name="Weng S."/>
            <person name="Wong E.D."/>
            <person name="Lloyd P."/>
            <person name="Skrzypek M.S."/>
            <person name="Miyasato S.R."/>
            <person name="Simison M."/>
            <person name="Cherry J.M."/>
        </authorList>
    </citation>
    <scope>GENOME REANNOTATION</scope>
    <source>
        <strain>ATCC 204508 / S288c</strain>
    </source>
</reference>
<reference key="4">
    <citation type="journal article" date="2002" name="Mol. Cell">
        <title>Maf1 is an essential mediator of diverse signals that repress RNA polymerase III transcription.</title>
        <authorList>
            <person name="Upadhya R."/>
            <person name="Lee J."/>
            <person name="Willis I.M."/>
        </authorList>
    </citation>
    <scope>FUNCTION</scope>
</reference>
<reference key="5">
    <citation type="journal article" date="2003" name="Nature">
        <title>Global analysis of protein expression in yeast.</title>
        <authorList>
            <person name="Ghaemmaghami S."/>
            <person name="Huh W.-K."/>
            <person name="Bower K."/>
            <person name="Howson R.W."/>
            <person name="Belle A."/>
            <person name="Dephoure N."/>
            <person name="O'Shea E.K."/>
            <person name="Weissman J.S."/>
        </authorList>
    </citation>
    <scope>LEVEL OF PROTEIN EXPRESSION [LARGE SCALE ANALYSIS]</scope>
</reference>
<reference key="6">
    <citation type="journal article" date="2007" name="J. Proteome Res.">
        <title>Large-scale phosphorylation analysis of alpha-factor-arrested Saccharomyces cerevisiae.</title>
        <authorList>
            <person name="Li X."/>
            <person name="Gerber S.A."/>
            <person name="Rudner A.D."/>
            <person name="Beausoleil S.A."/>
            <person name="Haas W."/>
            <person name="Villen J."/>
            <person name="Elias J.E."/>
            <person name="Gygi S.P."/>
        </authorList>
    </citation>
    <scope>PHOSPHORYLATION [LARGE SCALE ANALYSIS] AT SER-209 AND SER-210</scope>
    <scope>IDENTIFICATION BY MASS SPECTROMETRY [LARGE SCALE ANALYSIS]</scope>
    <source>
        <strain>ADR376</strain>
    </source>
</reference>
<reference key="7">
    <citation type="journal article" date="2007" name="Proc. Natl. Acad. Sci. U.S.A.">
        <title>Analysis of phosphorylation sites on proteins from Saccharomyces cerevisiae by electron transfer dissociation (ETD) mass spectrometry.</title>
        <authorList>
            <person name="Chi A."/>
            <person name="Huttenhower C."/>
            <person name="Geer L.Y."/>
            <person name="Coon J.J."/>
            <person name="Syka J.E.P."/>
            <person name="Bai D.L."/>
            <person name="Shabanowitz J."/>
            <person name="Burke D.J."/>
            <person name="Troyanskaya O.G."/>
            <person name="Hunt D.F."/>
        </authorList>
    </citation>
    <scope>IDENTIFICATION BY MASS SPECTROMETRY [LARGE SCALE ANALYSIS]</scope>
</reference>
<reference key="8">
    <citation type="journal article" date="2008" name="Mol. Cell. Proteomics">
        <title>A multidimensional chromatography technology for in-depth phosphoproteome analysis.</title>
        <authorList>
            <person name="Albuquerque C.P."/>
            <person name="Smolka M.B."/>
            <person name="Payne S.H."/>
            <person name="Bafna V."/>
            <person name="Eng J."/>
            <person name="Zhou H."/>
        </authorList>
    </citation>
    <scope>IDENTIFICATION BY MASS SPECTROMETRY [LARGE SCALE ANALYSIS]</scope>
</reference>
<reference key="9">
    <citation type="journal article" date="2009" name="Science">
        <title>Global analysis of Cdk1 substrate phosphorylation sites provides insights into evolution.</title>
        <authorList>
            <person name="Holt L.J."/>
            <person name="Tuch B.B."/>
            <person name="Villen J."/>
            <person name="Johnson A.D."/>
            <person name="Gygi S.P."/>
            <person name="Morgan D.O."/>
        </authorList>
    </citation>
    <scope>PHOSPHORYLATION [LARGE SCALE ANALYSIS] AT SER-90 AND THR-347</scope>
    <scope>IDENTIFICATION BY MASS SPECTROMETRY [LARGE SCALE ANALYSIS]</scope>
</reference>
<reference key="10">
    <citation type="journal article" date="2010" name="Mol. Biol. Cell">
        <title>The rapamycin-sensitive phosphoproteome reveals that TOR controls protein kinase A toward some but not all substrates.</title>
        <authorList>
            <person name="Soulard A."/>
            <person name="Cremonesi A."/>
            <person name="Moes S."/>
            <person name="Schutz F."/>
            <person name="Jeno P."/>
            <person name="Hall M.N."/>
        </authorList>
    </citation>
    <scope>PHOSPHORYLATION BY PKA</scope>
</reference>
<reference key="11">
    <citation type="journal article" date="2012" name="Proc. Natl. Acad. Sci. U.S.A.">
        <title>N-terminal acetylome analyses and functional insights of the N-terminal acetyltransferase NatB.</title>
        <authorList>
            <person name="Van Damme P."/>
            <person name="Lasa M."/>
            <person name="Polevoda B."/>
            <person name="Gazquez C."/>
            <person name="Elosegui-Artola A."/>
            <person name="Kim D.S."/>
            <person name="De Juan-Pardo E."/>
            <person name="Demeyer K."/>
            <person name="Hole K."/>
            <person name="Larrea E."/>
            <person name="Timmerman E."/>
            <person name="Prieto J."/>
            <person name="Arnesen T."/>
            <person name="Sherman F."/>
            <person name="Gevaert K."/>
            <person name="Aldabe R."/>
        </authorList>
    </citation>
    <scope>IDENTIFICATION BY MASS SPECTROMETRY [LARGE SCALE ANALYSIS]</scope>
</reference>
<organism>
    <name type="scientific">Saccharomyces cerevisiae (strain ATCC 204508 / S288c)</name>
    <name type="common">Baker's yeast</name>
    <dbReference type="NCBI Taxonomy" id="559292"/>
    <lineage>
        <taxon>Eukaryota</taxon>
        <taxon>Fungi</taxon>
        <taxon>Dikarya</taxon>
        <taxon>Ascomycota</taxon>
        <taxon>Saccharomycotina</taxon>
        <taxon>Saccharomycetes</taxon>
        <taxon>Saccharomycetales</taxon>
        <taxon>Saccharomycetaceae</taxon>
        <taxon>Saccharomyces</taxon>
    </lineage>
</organism>
<gene>
    <name type="primary">MAF1</name>
    <name type="ordered locus">YDR005C</name>
    <name type="ORF">YD8119.11C</name>
</gene>
<accession>P41910</accession>
<accession>D6VRZ3</accession>
<protein>
    <recommendedName>
        <fullName>Repressor of RNA polymerase III transcription MAF1</fullName>
    </recommendedName>
</protein>
<feature type="chain" id="PRO_0000213972" description="Repressor of RNA polymerase III transcription MAF1">
    <location>
        <begin position="1"/>
        <end position="395"/>
    </location>
</feature>
<feature type="region of interest" description="Disordered" evidence="1">
    <location>
        <begin position="69"/>
        <end position="91"/>
    </location>
</feature>
<feature type="region of interest" description="Disordered" evidence="1">
    <location>
        <begin position="104"/>
        <end position="138"/>
    </location>
</feature>
<feature type="region of interest" description="Disordered" evidence="1">
    <location>
        <begin position="152"/>
        <end position="223"/>
    </location>
</feature>
<feature type="compositionally biased region" description="Polar residues" evidence="1">
    <location>
        <begin position="69"/>
        <end position="84"/>
    </location>
</feature>
<feature type="compositionally biased region" description="Low complexity" evidence="1">
    <location>
        <begin position="106"/>
        <end position="131"/>
    </location>
</feature>
<feature type="compositionally biased region" description="Low complexity" evidence="1">
    <location>
        <begin position="152"/>
        <end position="166"/>
    </location>
</feature>
<feature type="compositionally biased region" description="Low complexity" evidence="1">
    <location>
        <begin position="178"/>
        <end position="197"/>
    </location>
</feature>
<feature type="modified residue" description="Phosphoserine" evidence="7">
    <location>
        <position position="90"/>
    </location>
</feature>
<feature type="modified residue" description="Phosphoserine" evidence="6">
    <location>
        <position position="209"/>
    </location>
</feature>
<feature type="modified residue" description="Phosphoserine" evidence="6">
    <location>
        <position position="210"/>
    </location>
</feature>
<feature type="modified residue" description="Phosphothreonine" evidence="7">
    <location>
        <position position="347"/>
    </location>
</feature>
<feature type="helix" evidence="8">
    <location>
        <begin position="7"/>
        <end position="15"/>
    </location>
</feature>
<feature type="strand" evidence="8">
    <location>
        <begin position="16"/>
        <end position="20"/>
    </location>
</feature>
<feature type="strand" evidence="8">
    <location>
        <begin position="23"/>
        <end position="28"/>
    </location>
</feature>
<feature type="helix" evidence="8">
    <location>
        <begin position="234"/>
        <end position="245"/>
    </location>
</feature>
<feature type="strand" evidence="8">
    <location>
        <begin position="251"/>
        <end position="253"/>
    </location>
</feature>
<feature type="helix" evidence="8">
    <location>
        <begin position="264"/>
        <end position="276"/>
    </location>
</feature>
<feature type="turn" evidence="8">
    <location>
        <begin position="277"/>
        <end position="279"/>
    </location>
</feature>
<feature type="helix" evidence="8">
    <location>
        <begin position="285"/>
        <end position="294"/>
    </location>
</feature>
<feature type="strand" evidence="8">
    <location>
        <begin position="300"/>
        <end position="302"/>
    </location>
</feature>
<feature type="turn" evidence="8">
    <location>
        <begin position="310"/>
        <end position="313"/>
    </location>
</feature>
<feature type="strand" evidence="8">
    <location>
        <begin position="317"/>
        <end position="326"/>
    </location>
</feature>
<feature type="strand" evidence="8">
    <location>
        <begin position="328"/>
        <end position="330"/>
    </location>
</feature>
<feature type="strand" evidence="8">
    <location>
        <begin position="333"/>
        <end position="341"/>
    </location>
</feature>
<sequence>MKFIDELDIERVNQTLNFETNDCKIVGSCDIFTTKAVASDRKLYKTIDQHLDTILQENENYNATLQQQLAAPETNQSPCSSPFYSNRRDSNSFWEQKRRISFSEYNSNNNTNNSNGNSSNNNNYSGPNGSSPATFPKSAKLNDQNLKELVSNYDSGSMSSSSLDSSSKNDERIRRRSSSSISSFKSGKSSNNNYSSGTATNNVNKRRKSSINERPSNLSLGPFGPINEPSSRKIFAYLIAILNASYPDHDFSSVEPTDFVKTSLKTFISKFENTLYSLGRQPEEWVWEVINSHMTLSDCVLFQYSPSNSFLEDEPGYLWNLIGFLYNRKRKRVAYLYLICSRLNSSTGEVEDALAKKPQGKLIIDDGSNEYEGEYDFTYDENVIDDKSDQEESLQ</sequence>
<evidence type="ECO:0000256" key="1">
    <source>
        <dbReference type="SAM" id="MobiDB-lite"/>
    </source>
</evidence>
<evidence type="ECO:0000269" key="2">
    <source>
    </source>
</evidence>
<evidence type="ECO:0000269" key="3">
    <source>
    </source>
</evidence>
<evidence type="ECO:0000269" key="4">
    <source>
    </source>
</evidence>
<evidence type="ECO:0000305" key="5"/>
<evidence type="ECO:0007744" key="6">
    <source>
    </source>
</evidence>
<evidence type="ECO:0007744" key="7">
    <source>
    </source>
</evidence>
<evidence type="ECO:0007829" key="8">
    <source>
        <dbReference type="PDB" id="6TUT"/>
    </source>
</evidence>
<proteinExistence type="evidence at protein level"/>